<name>SYI_LEVBA</name>
<comment type="function">
    <text evidence="1">Catalyzes the attachment of isoleucine to tRNA(Ile). As IleRS can inadvertently accommodate and process structurally similar amino acids such as valine, to avoid such errors it has two additional distinct tRNA(Ile)-dependent editing activities. One activity is designated as 'pretransfer' editing and involves the hydrolysis of activated Val-AMP. The other activity is designated 'posttransfer' editing and involves deacylation of mischarged Val-tRNA(Ile).</text>
</comment>
<comment type="catalytic activity">
    <reaction evidence="1">
        <text>tRNA(Ile) + L-isoleucine + ATP = L-isoleucyl-tRNA(Ile) + AMP + diphosphate</text>
        <dbReference type="Rhea" id="RHEA:11060"/>
        <dbReference type="Rhea" id="RHEA-COMP:9666"/>
        <dbReference type="Rhea" id="RHEA-COMP:9695"/>
        <dbReference type="ChEBI" id="CHEBI:30616"/>
        <dbReference type="ChEBI" id="CHEBI:33019"/>
        <dbReference type="ChEBI" id="CHEBI:58045"/>
        <dbReference type="ChEBI" id="CHEBI:78442"/>
        <dbReference type="ChEBI" id="CHEBI:78528"/>
        <dbReference type="ChEBI" id="CHEBI:456215"/>
        <dbReference type="EC" id="6.1.1.5"/>
    </reaction>
</comment>
<comment type="cofactor">
    <cofactor evidence="1">
        <name>Zn(2+)</name>
        <dbReference type="ChEBI" id="CHEBI:29105"/>
    </cofactor>
    <text evidence="1">Binds 1 zinc ion per subunit.</text>
</comment>
<comment type="subunit">
    <text evidence="1">Monomer.</text>
</comment>
<comment type="subcellular location">
    <subcellularLocation>
        <location evidence="1">Cytoplasm</location>
    </subcellularLocation>
</comment>
<comment type="domain">
    <text evidence="1">IleRS has two distinct active sites: one for aminoacylation and one for editing. The misactivated valine is translocated from the active site to the editing site, which sterically excludes the correctly activated isoleucine. The single editing site contains two valyl binding pockets, one specific for each substrate (Val-AMP or Val-tRNA(Ile)).</text>
</comment>
<comment type="similarity">
    <text evidence="1">Belongs to the class-I aminoacyl-tRNA synthetase family. IleS type 1 subfamily.</text>
</comment>
<keyword id="KW-0030">Aminoacyl-tRNA synthetase</keyword>
<keyword id="KW-0067">ATP-binding</keyword>
<keyword id="KW-0963">Cytoplasm</keyword>
<keyword id="KW-0436">Ligase</keyword>
<keyword id="KW-0479">Metal-binding</keyword>
<keyword id="KW-0547">Nucleotide-binding</keyword>
<keyword id="KW-0648">Protein biosynthesis</keyword>
<keyword id="KW-1185">Reference proteome</keyword>
<keyword id="KW-0862">Zinc</keyword>
<dbReference type="EC" id="6.1.1.5" evidence="1"/>
<dbReference type="EMBL" id="CP000416">
    <property type="protein sequence ID" value="ABJ64539.1"/>
    <property type="molecule type" value="Genomic_DNA"/>
</dbReference>
<dbReference type="RefSeq" id="WP_011668167.1">
    <property type="nucleotide sequence ID" value="NC_008497.1"/>
</dbReference>
<dbReference type="SMR" id="Q03QI3"/>
<dbReference type="STRING" id="387344.LVIS_1441"/>
<dbReference type="KEGG" id="lbr:LVIS_1441"/>
<dbReference type="PATRIC" id="fig|387344.15.peg.1378"/>
<dbReference type="eggNOG" id="COG0060">
    <property type="taxonomic scope" value="Bacteria"/>
</dbReference>
<dbReference type="HOGENOM" id="CLU_001493_7_1_9"/>
<dbReference type="Proteomes" id="UP000001652">
    <property type="component" value="Chromosome"/>
</dbReference>
<dbReference type="GO" id="GO:0005829">
    <property type="term" value="C:cytosol"/>
    <property type="evidence" value="ECO:0007669"/>
    <property type="project" value="TreeGrafter"/>
</dbReference>
<dbReference type="GO" id="GO:0002161">
    <property type="term" value="F:aminoacyl-tRNA deacylase activity"/>
    <property type="evidence" value="ECO:0007669"/>
    <property type="project" value="InterPro"/>
</dbReference>
<dbReference type="GO" id="GO:0005524">
    <property type="term" value="F:ATP binding"/>
    <property type="evidence" value="ECO:0007669"/>
    <property type="project" value="UniProtKB-UniRule"/>
</dbReference>
<dbReference type="GO" id="GO:0004822">
    <property type="term" value="F:isoleucine-tRNA ligase activity"/>
    <property type="evidence" value="ECO:0007669"/>
    <property type="project" value="UniProtKB-UniRule"/>
</dbReference>
<dbReference type="GO" id="GO:0000049">
    <property type="term" value="F:tRNA binding"/>
    <property type="evidence" value="ECO:0007669"/>
    <property type="project" value="InterPro"/>
</dbReference>
<dbReference type="GO" id="GO:0008270">
    <property type="term" value="F:zinc ion binding"/>
    <property type="evidence" value="ECO:0007669"/>
    <property type="project" value="UniProtKB-UniRule"/>
</dbReference>
<dbReference type="GO" id="GO:0006428">
    <property type="term" value="P:isoleucyl-tRNA aminoacylation"/>
    <property type="evidence" value="ECO:0007669"/>
    <property type="project" value="UniProtKB-UniRule"/>
</dbReference>
<dbReference type="CDD" id="cd07960">
    <property type="entry name" value="Anticodon_Ia_Ile_BEm"/>
    <property type="match status" value="1"/>
</dbReference>
<dbReference type="CDD" id="cd00818">
    <property type="entry name" value="IleRS_core"/>
    <property type="match status" value="1"/>
</dbReference>
<dbReference type="FunFam" id="1.10.10.830:FF:000001">
    <property type="entry name" value="Isoleucine--tRNA ligase"/>
    <property type="match status" value="1"/>
</dbReference>
<dbReference type="FunFam" id="1.10.730.20:FF:000001">
    <property type="entry name" value="Isoleucine--tRNA ligase"/>
    <property type="match status" value="1"/>
</dbReference>
<dbReference type="FunFam" id="3.40.50.620:FF:000152">
    <property type="entry name" value="Isoleucine--tRNA ligase"/>
    <property type="match status" value="1"/>
</dbReference>
<dbReference type="FunFam" id="3.90.740.10:FF:000006">
    <property type="entry name" value="Isoleucine--tRNA ligase"/>
    <property type="match status" value="1"/>
</dbReference>
<dbReference type="Gene3D" id="1.10.730.20">
    <property type="match status" value="1"/>
</dbReference>
<dbReference type="Gene3D" id="3.40.50.620">
    <property type="entry name" value="HUPs"/>
    <property type="match status" value="2"/>
</dbReference>
<dbReference type="Gene3D" id="1.10.10.830">
    <property type="entry name" value="Ile-tRNA synthetase CP2 domain-like"/>
    <property type="match status" value="1"/>
</dbReference>
<dbReference type="Gene3D" id="3.90.740.10">
    <property type="entry name" value="Valyl/Leucyl/Isoleucyl-tRNA synthetase, editing domain"/>
    <property type="match status" value="1"/>
</dbReference>
<dbReference type="HAMAP" id="MF_02002">
    <property type="entry name" value="Ile_tRNA_synth_type1"/>
    <property type="match status" value="1"/>
</dbReference>
<dbReference type="InterPro" id="IPR001412">
    <property type="entry name" value="aa-tRNA-synth_I_CS"/>
</dbReference>
<dbReference type="InterPro" id="IPR002300">
    <property type="entry name" value="aa-tRNA-synth_Ia"/>
</dbReference>
<dbReference type="InterPro" id="IPR033708">
    <property type="entry name" value="Anticodon_Ile_BEm"/>
</dbReference>
<dbReference type="InterPro" id="IPR002301">
    <property type="entry name" value="Ile-tRNA-ligase"/>
</dbReference>
<dbReference type="InterPro" id="IPR023585">
    <property type="entry name" value="Ile-tRNA-ligase_type1"/>
</dbReference>
<dbReference type="InterPro" id="IPR050081">
    <property type="entry name" value="Ile-tRNA_ligase"/>
</dbReference>
<dbReference type="InterPro" id="IPR013155">
    <property type="entry name" value="M/V/L/I-tRNA-synth_anticd-bd"/>
</dbReference>
<dbReference type="InterPro" id="IPR014729">
    <property type="entry name" value="Rossmann-like_a/b/a_fold"/>
</dbReference>
<dbReference type="InterPro" id="IPR009080">
    <property type="entry name" value="tRNAsynth_Ia_anticodon-bd"/>
</dbReference>
<dbReference type="InterPro" id="IPR009008">
    <property type="entry name" value="Val/Leu/Ile-tRNA-synth_edit"/>
</dbReference>
<dbReference type="InterPro" id="IPR010663">
    <property type="entry name" value="Znf_FPG/IleRS"/>
</dbReference>
<dbReference type="NCBIfam" id="TIGR00392">
    <property type="entry name" value="ileS"/>
    <property type="match status" value="1"/>
</dbReference>
<dbReference type="PANTHER" id="PTHR42765:SF1">
    <property type="entry name" value="ISOLEUCINE--TRNA LIGASE, MITOCHONDRIAL"/>
    <property type="match status" value="1"/>
</dbReference>
<dbReference type="PANTHER" id="PTHR42765">
    <property type="entry name" value="SOLEUCYL-TRNA SYNTHETASE"/>
    <property type="match status" value="1"/>
</dbReference>
<dbReference type="Pfam" id="PF08264">
    <property type="entry name" value="Anticodon_1"/>
    <property type="match status" value="1"/>
</dbReference>
<dbReference type="Pfam" id="PF00133">
    <property type="entry name" value="tRNA-synt_1"/>
    <property type="match status" value="1"/>
</dbReference>
<dbReference type="Pfam" id="PF06827">
    <property type="entry name" value="zf-FPG_IleRS"/>
    <property type="match status" value="1"/>
</dbReference>
<dbReference type="PRINTS" id="PR00984">
    <property type="entry name" value="TRNASYNTHILE"/>
</dbReference>
<dbReference type="SUPFAM" id="SSF47323">
    <property type="entry name" value="Anticodon-binding domain of a subclass of class I aminoacyl-tRNA synthetases"/>
    <property type="match status" value="1"/>
</dbReference>
<dbReference type="SUPFAM" id="SSF52374">
    <property type="entry name" value="Nucleotidylyl transferase"/>
    <property type="match status" value="1"/>
</dbReference>
<dbReference type="SUPFAM" id="SSF50677">
    <property type="entry name" value="ValRS/IleRS/LeuRS editing domain"/>
    <property type="match status" value="1"/>
</dbReference>
<dbReference type="PROSITE" id="PS00178">
    <property type="entry name" value="AA_TRNA_LIGASE_I"/>
    <property type="match status" value="1"/>
</dbReference>
<accession>Q03QI3</accession>
<proteinExistence type="inferred from homology"/>
<sequence length="937" mass="105621">MRVKDTLNLGKTKFKMRGNLPVKEVDRQKAWAENKMYEARQKLNEGKPTFILHDGPPYANGPIHMGHALNKISKDIIVRYKSMSGFRAPYVPGWDTHGLPIEQQLTKAGYDRKKMSTAEFRDLCREYALKQVDQQREGFKRLGVSAEWDNPYLTLKPEFEAAEVRVFGEMAKRGLIYKGKKPVYWSWSSESAMAEAEVEYHDVTSPSAFYGEQVVDGKGVLDTDTYLVVWTTTPWTIPGSEGITIDAGIEYAVVKPANDDRKFVLAADLVDQNAEMFGWEDVQVIKTVMGQDLDNVTAQHPFIADRKLVVMLGDFVTTESGTGLVHTAPGLGEDDFNVGALYHLPVLVPVDDKGYMTAEAGADFAGVFYEDANQIALDKLKAANALLKYMPYEHSYPFDWRTKKPVIFRATPQWFASVDKIRDEILAQLKDVKFQPDWGQRRLANMIKDRGDWVISRQRVWGVPLPIFYGEDGEAIITPETVDHVADLFAEYGSNIWFKREAKDLLPDGFTSEHSPNGEFTKETDIMDVWFDSGTSHQGVLAERDYLDFPADLYLEGSDQYRGWFNSSLITSVAATGKAPYKQVVSQGFTLDKDGHKMSKSLGNTIAPDEIISKMGADIVRLWVTSVDSSADVRVSTEAFVKISDSYKKLRNTMRYLLANTSDFDPQTDAIAVDDLQPVDRHMLYQLNEFAKSVRAHYDHYDFLNIYKELINFVVSDLSAFYLDFAKDILYIEAADSPVRRSMQTVFYQIAVSLTKLITPILPHTAEEIWDFLKEPEDFVQLAEMPAVLELTDANEQPDDGHQSAWDHFMTLRSHVLKALEEARDAKLIGKAAEAHLDLYVDEETKRLLDQLNVNVQQILLVSGLDVASLDQAPADALTFDHLAVKVTPAAGEVCDRCRLTKEDVGSDSAYPHFCARCAAIVRQNFPETATEGFDEN</sequence>
<feature type="chain" id="PRO_1000022081" description="Isoleucine--tRNA ligase">
    <location>
        <begin position="1"/>
        <end position="937"/>
    </location>
</feature>
<feature type="short sequence motif" description="'HIGH' region">
    <location>
        <begin position="57"/>
        <end position="67"/>
    </location>
</feature>
<feature type="short sequence motif" description="'KMSKS' region">
    <location>
        <begin position="597"/>
        <end position="601"/>
    </location>
</feature>
<feature type="binding site" evidence="1">
    <location>
        <position position="556"/>
    </location>
    <ligand>
        <name>L-isoleucyl-5'-AMP</name>
        <dbReference type="ChEBI" id="CHEBI:178002"/>
    </ligand>
</feature>
<feature type="binding site" evidence="1">
    <location>
        <position position="600"/>
    </location>
    <ligand>
        <name>ATP</name>
        <dbReference type="ChEBI" id="CHEBI:30616"/>
    </ligand>
</feature>
<feature type="binding site" evidence="1">
    <location>
        <position position="895"/>
    </location>
    <ligand>
        <name>Zn(2+)</name>
        <dbReference type="ChEBI" id="CHEBI:29105"/>
    </ligand>
</feature>
<feature type="binding site" evidence="1">
    <location>
        <position position="898"/>
    </location>
    <ligand>
        <name>Zn(2+)</name>
        <dbReference type="ChEBI" id="CHEBI:29105"/>
    </ligand>
</feature>
<feature type="binding site" evidence="1">
    <location>
        <position position="915"/>
    </location>
    <ligand>
        <name>Zn(2+)</name>
        <dbReference type="ChEBI" id="CHEBI:29105"/>
    </ligand>
</feature>
<feature type="binding site" evidence="1">
    <location>
        <position position="918"/>
    </location>
    <ligand>
        <name>Zn(2+)</name>
        <dbReference type="ChEBI" id="CHEBI:29105"/>
    </ligand>
</feature>
<protein>
    <recommendedName>
        <fullName evidence="1">Isoleucine--tRNA ligase</fullName>
        <ecNumber evidence="1">6.1.1.5</ecNumber>
    </recommendedName>
    <alternativeName>
        <fullName evidence="1">Isoleucyl-tRNA synthetase</fullName>
        <shortName evidence="1">IleRS</shortName>
    </alternativeName>
</protein>
<gene>
    <name evidence="1" type="primary">ileS</name>
    <name type="ordered locus">LVIS_1441</name>
</gene>
<organism>
    <name type="scientific">Levilactobacillus brevis (strain ATCC 367 / BCRC 12310 / CIP 105137 / JCM 1170 / LMG 11437 / NCIMB 947 / NCTC 947)</name>
    <name type="common">Lactobacillus brevis</name>
    <dbReference type="NCBI Taxonomy" id="387344"/>
    <lineage>
        <taxon>Bacteria</taxon>
        <taxon>Bacillati</taxon>
        <taxon>Bacillota</taxon>
        <taxon>Bacilli</taxon>
        <taxon>Lactobacillales</taxon>
        <taxon>Lactobacillaceae</taxon>
        <taxon>Levilactobacillus</taxon>
    </lineage>
</organism>
<reference key="1">
    <citation type="journal article" date="2006" name="Proc. Natl. Acad. Sci. U.S.A.">
        <title>Comparative genomics of the lactic acid bacteria.</title>
        <authorList>
            <person name="Makarova K.S."/>
            <person name="Slesarev A."/>
            <person name="Wolf Y.I."/>
            <person name="Sorokin A."/>
            <person name="Mirkin B."/>
            <person name="Koonin E.V."/>
            <person name="Pavlov A."/>
            <person name="Pavlova N."/>
            <person name="Karamychev V."/>
            <person name="Polouchine N."/>
            <person name="Shakhova V."/>
            <person name="Grigoriev I."/>
            <person name="Lou Y."/>
            <person name="Rohksar D."/>
            <person name="Lucas S."/>
            <person name="Huang K."/>
            <person name="Goodstein D.M."/>
            <person name="Hawkins T."/>
            <person name="Plengvidhya V."/>
            <person name="Welker D."/>
            <person name="Hughes J."/>
            <person name="Goh Y."/>
            <person name="Benson A."/>
            <person name="Baldwin K."/>
            <person name="Lee J.-H."/>
            <person name="Diaz-Muniz I."/>
            <person name="Dosti B."/>
            <person name="Smeianov V."/>
            <person name="Wechter W."/>
            <person name="Barabote R."/>
            <person name="Lorca G."/>
            <person name="Altermann E."/>
            <person name="Barrangou R."/>
            <person name="Ganesan B."/>
            <person name="Xie Y."/>
            <person name="Rawsthorne H."/>
            <person name="Tamir D."/>
            <person name="Parker C."/>
            <person name="Breidt F."/>
            <person name="Broadbent J.R."/>
            <person name="Hutkins R."/>
            <person name="O'Sullivan D."/>
            <person name="Steele J."/>
            <person name="Unlu G."/>
            <person name="Saier M.H. Jr."/>
            <person name="Klaenhammer T."/>
            <person name="Richardson P."/>
            <person name="Kozyavkin S."/>
            <person name="Weimer B.C."/>
            <person name="Mills D.A."/>
        </authorList>
    </citation>
    <scope>NUCLEOTIDE SEQUENCE [LARGE SCALE GENOMIC DNA]</scope>
    <source>
        <strain>ATCC 367 / BCRC 12310 / CIP 105137 / JCM 1170 / LMG 11437 / NCIMB 947 / NCTC 947</strain>
    </source>
</reference>
<evidence type="ECO:0000255" key="1">
    <source>
        <dbReference type="HAMAP-Rule" id="MF_02002"/>
    </source>
</evidence>